<organism>
    <name type="scientific">Haemophilus influenzae (strain ATCC 51907 / DSM 11121 / KW20 / Rd)</name>
    <dbReference type="NCBI Taxonomy" id="71421"/>
    <lineage>
        <taxon>Bacteria</taxon>
        <taxon>Pseudomonadati</taxon>
        <taxon>Pseudomonadota</taxon>
        <taxon>Gammaproteobacteria</taxon>
        <taxon>Pasteurellales</taxon>
        <taxon>Pasteurellaceae</taxon>
        <taxon>Haemophilus</taxon>
    </lineage>
</organism>
<gene>
    <name evidence="2" type="primary">hfq</name>
    <name type="ordered locus">HI_0411</name>
</gene>
<comment type="function">
    <text evidence="2">RNA chaperone that binds small regulatory RNA (sRNAs) and mRNAs to facilitate mRNA translational regulation in response to envelope stress, environmental stress and changes in metabolite concentrations. Also binds with high specificity to tRNAs.</text>
</comment>
<comment type="subunit">
    <text evidence="2">Homohexamer.</text>
</comment>
<comment type="similarity">
    <text evidence="2">Belongs to the Hfq family.</text>
</comment>
<proteinExistence type="inferred from homology"/>
<protein>
    <recommendedName>
        <fullName evidence="2">RNA-binding protein Hfq</fullName>
    </recommendedName>
</protein>
<reference key="1">
    <citation type="journal article" date="1995" name="Science">
        <title>Whole-genome random sequencing and assembly of Haemophilus influenzae Rd.</title>
        <authorList>
            <person name="Fleischmann R.D."/>
            <person name="Adams M.D."/>
            <person name="White O."/>
            <person name="Clayton R.A."/>
            <person name="Kirkness E.F."/>
            <person name="Kerlavage A.R."/>
            <person name="Bult C.J."/>
            <person name="Tomb J.-F."/>
            <person name="Dougherty B.A."/>
            <person name="Merrick J.M."/>
            <person name="McKenney K."/>
            <person name="Sutton G.G."/>
            <person name="FitzHugh W."/>
            <person name="Fields C.A."/>
            <person name="Gocayne J.D."/>
            <person name="Scott J.D."/>
            <person name="Shirley R."/>
            <person name="Liu L.-I."/>
            <person name="Glodek A."/>
            <person name="Kelley J.M."/>
            <person name="Weidman J.F."/>
            <person name="Phillips C.A."/>
            <person name="Spriggs T."/>
            <person name="Hedblom E."/>
            <person name="Cotton M.D."/>
            <person name="Utterback T.R."/>
            <person name="Hanna M.C."/>
            <person name="Nguyen D.T."/>
            <person name="Saudek D.M."/>
            <person name="Brandon R.C."/>
            <person name="Fine L.D."/>
            <person name="Fritchman J.L."/>
            <person name="Fuhrmann J.L."/>
            <person name="Geoghagen N.S.M."/>
            <person name="Gnehm C.L."/>
            <person name="McDonald L.A."/>
            <person name="Small K.V."/>
            <person name="Fraser C.M."/>
            <person name="Smith H.O."/>
            <person name="Venter J.C."/>
        </authorList>
    </citation>
    <scope>NUCLEOTIDE SEQUENCE [LARGE SCALE GENOMIC DNA]</scope>
    <source>
        <strain>ATCC 51907 / DSM 11121 / KW20 / Rd</strain>
    </source>
</reference>
<evidence type="ECO:0000250" key="1"/>
<evidence type="ECO:0000255" key="2">
    <source>
        <dbReference type="HAMAP-Rule" id="MF_00436"/>
    </source>
</evidence>
<evidence type="ECO:0000255" key="3">
    <source>
        <dbReference type="PROSITE-ProRule" id="PRU01346"/>
    </source>
</evidence>
<evidence type="ECO:0000256" key="4">
    <source>
        <dbReference type="SAM" id="MobiDB-lite"/>
    </source>
</evidence>
<name>HFQ_HAEIN</name>
<dbReference type="EMBL" id="L42023">
    <property type="protein sequence ID" value="AAC22070.1"/>
    <property type="molecule type" value="Genomic_DNA"/>
</dbReference>
<dbReference type="PIR" id="D64066">
    <property type="entry name" value="D64066"/>
</dbReference>
<dbReference type="RefSeq" id="NP_438573.1">
    <property type="nucleotide sequence ID" value="NC_000907.1"/>
</dbReference>
<dbReference type="SMR" id="P44437"/>
<dbReference type="STRING" id="71421.HI_0411"/>
<dbReference type="EnsemblBacteria" id="AAC22070">
    <property type="protein sequence ID" value="AAC22070"/>
    <property type="gene ID" value="HI_0411"/>
</dbReference>
<dbReference type="KEGG" id="hin:HI_0411"/>
<dbReference type="PATRIC" id="fig|71421.8.peg.430"/>
<dbReference type="eggNOG" id="COG1923">
    <property type="taxonomic scope" value="Bacteria"/>
</dbReference>
<dbReference type="HOGENOM" id="CLU_113688_2_2_6"/>
<dbReference type="OrthoDB" id="9799751at2"/>
<dbReference type="PhylomeDB" id="P44437"/>
<dbReference type="BioCyc" id="HINF71421:G1GJ1-426-MONOMER"/>
<dbReference type="Proteomes" id="UP000000579">
    <property type="component" value="Chromosome"/>
</dbReference>
<dbReference type="GO" id="GO:0005829">
    <property type="term" value="C:cytosol"/>
    <property type="evidence" value="ECO:0000318"/>
    <property type="project" value="GO_Central"/>
</dbReference>
<dbReference type="GO" id="GO:0003723">
    <property type="term" value="F:RNA binding"/>
    <property type="evidence" value="ECO:0000318"/>
    <property type="project" value="GO_Central"/>
</dbReference>
<dbReference type="GO" id="GO:0006355">
    <property type="term" value="P:regulation of DNA-templated transcription"/>
    <property type="evidence" value="ECO:0007669"/>
    <property type="project" value="InterPro"/>
</dbReference>
<dbReference type="GO" id="GO:0043487">
    <property type="term" value="P:regulation of RNA stability"/>
    <property type="evidence" value="ECO:0000318"/>
    <property type="project" value="GO_Central"/>
</dbReference>
<dbReference type="GO" id="GO:0045974">
    <property type="term" value="P:regulation of translation, ncRNA-mediated"/>
    <property type="evidence" value="ECO:0000318"/>
    <property type="project" value="GO_Central"/>
</dbReference>
<dbReference type="CDD" id="cd01716">
    <property type="entry name" value="Hfq"/>
    <property type="match status" value="1"/>
</dbReference>
<dbReference type="FunFam" id="2.30.30.100:FF:000001">
    <property type="entry name" value="RNA-binding protein Hfq"/>
    <property type="match status" value="1"/>
</dbReference>
<dbReference type="Gene3D" id="2.30.30.100">
    <property type="match status" value="1"/>
</dbReference>
<dbReference type="HAMAP" id="MF_00436">
    <property type="entry name" value="Hfq"/>
    <property type="match status" value="1"/>
</dbReference>
<dbReference type="InterPro" id="IPR005001">
    <property type="entry name" value="Hfq"/>
</dbReference>
<dbReference type="InterPro" id="IPR010920">
    <property type="entry name" value="LSM_dom_sf"/>
</dbReference>
<dbReference type="InterPro" id="IPR047575">
    <property type="entry name" value="Sm"/>
</dbReference>
<dbReference type="NCBIfam" id="TIGR02383">
    <property type="entry name" value="Hfq"/>
    <property type="match status" value="1"/>
</dbReference>
<dbReference type="NCBIfam" id="NF001602">
    <property type="entry name" value="PRK00395.1"/>
    <property type="match status" value="1"/>
</dbReference>
<dbReference type="PANTHER" id="PTHR34772">
    <property type="entry name" value="RNA-BINDING PROTEIN HFQ"/>
    <property type="match status" value="1"/>
</dbReference>
<dbReference type="PANTHER" id="PTHR34772:SF1">
    <property type="entry name" value="RNA-BINDING PROTEIN HFQ"/>
    <property type="match status" value="1"/>
</dbReference>
<dbReference type="Pfam" id="PF17209">
    <property type="entry name" value="Hfq"/>
    <property type="match status" value="1"/>
</dbReference>
<dbReference type="SUPFAM" id="SSF50182">
    <property type="entry name" value="Sm-like ribonucleoproteins"/>
    <property type="match status" value="1"/>
</dbReference>
<dbReference type="PROSITE" id="PS52002">
    <property type="entry name" value="SM"/>
    <property type="match status" value="1"/>
</dbReference>
<sequence length="91" mass="10250">MAKGQSLQDPYLNALRRERIPVSIYLVNGIKLQGQIESFDQFVILLKNTVNQMVYKHAISTVVPARSVSHHNNNHHTAPTEAVENVETQAE</sequence>
<feature type="initiator methionine" description="Removed" evidence="1">
    <location>
        <position position="1"/>
    </location>
</feature>
<feature type="chain" id="PRO_0000095642" description="RNA-binding protein Hfq">
    <location>
        <begin position="2"/>
        <end position="91"/>
    </location>
</feature>
<feature type="domain" description="Sm" evidence="3">
    <location>
        <begin position="9"/>
        <end position="68"/>
    </location>
</feature>
<feature type="region of interest" description="Disordered" evidence="4">
    <location>
        <begin position="69"/>
        <end position="91"/>
    </location>
</feature>
<accession>P44437</accession>
<keyword id="KW-1185">Reference proteome</keyword>
<keyword id="KW-0694">RNA-binding</keyword>
<keyword id="KW-0346">Stress response</keyword>